<name>ATPG_PROMM</name>
<feature type="chain" id="PRO_0000073341" description="ATP synthase gamma chain">
    <location>
        <begin position="1"/>
        <end position="316"/>
    </location>
</feature>
<evidence type="ECO:0000255" key="1">
    <source>
        <dbReference type="HAMAP-Rule" id="MF_00815"/>
    </source>
</evidence>
<gene>
    <name evidence="1" type="primary">atpG</name>
    <name evidence="1" type="synonym">atpC</name>
    <name type="ordered locus">PMT_1466</name>
</gene>
<proteinExistence type="inferred from homology"/>
<comment type="function">
    <text evidence="1">Produces ATP from ADP in the presence of a proton gradient across the membrane. The gamma chain is believed to be important in regulating ATPase activity and the flow of protons through the CF(0) complex.</text>
</comment>
<comment type="subunit">
    <text evidence="1">F-type ATPases have 2 components, CF(1) - the catalytic core - and CF(0) - the membrane proton channel. CF(1) has five subunits: alpha(3), beta(3), gamma(1), delta(1), epsilon(1). CF(0) has three main subunits: a, b and c.</text>
</comment>
<comment type="subcellular location">
    <subcellularLocation>
        <location evidence="1">Cellular thylakoid membrane</location>
        <topology evidence="1">Peripheral membrane protein</topology>
    </subcellularLocation>
</comment>
<comment type="similarity">
    <text evidence="1">Belongs to the ATPase gamma chain family.</text>
</comment>
<accession>Q7V5S8</accession>
<dbReference type="EMBL" id="BX548175">
    <property type="protein sequence ID" value="CAE21641.1"/>
    <property type="molecule type" value="Genomic_DNA"/>
</dbReference>
<dbReference type="RefSeq" id="WP_011130834.1">
    <property type="nucleotide sequence ID" value="NC_005071.1"/>
</dbReference>
<dbReference type="SMR" id="Q7V5S8"/>
<dbReference type="KEGG" id="pmt:PMT_1466"/>
<dbReference type="eggNOG" id="COG0224">
    <property type="taxonomic scope" value="Bacteria"/>
</dbReference>
<dbReference type="HOGENOM" id="CLU_050669_0_0_3"/>
<dbReference type="OrthoDB" id="9812769at2"/>
<dbReference type="Proteomes" id="UP000001423">
    <property type="component" value="Chromosome"/>
</dbReference>
<dbReference type="GO" id="GO:0031676">
    <property type="term" value="C:plasma membrane-derived thylakoid membrane"/>
    <property type="evidence" value="ECO:0007669"/>
    <property type="project" value="UniProtKB-SubCell"/>
</dbReference>
<dbReference type="GO" id="GO:0045259">
    <property type="term" value="C:proton-transporting ATP synthase complex"/>
    <property type="evidence" value="ECO:0007669"/>
    <property type="project" value="UniProtKB-KW"/>
</dbReference>
<dbReference type="GO" id="GO:0005524">
    <property type="term" value="F:ATP binding"/>
    <property type="evidence" value="ECO:0007669"/>
    <property type="project" value="UniProtKB-UniRule"/>
</dbReference>
<dbReference type="GO" id="GO:0046933">
    <property type="term" value="F:proton-transporting ATP synthase activity, rotational mechanism"/>
    <property type="evidence" value="ECO:0007669"/>
    <property type="project" value="UniProtKB-UniRule"/>
</dbReference>
<dbReference type="CDD" id="cd12151">
    <property type="entry name" value="F1-ATPase_gamma"/>
    <property type="match status" value="1"/>
</dbReference>
<dbReference type="FunFam" id="3.40.1380.10:FF:000006">
    <property type="entry name" value="ATP synthase gamma chain"/>
    <property type="match status" value="1"/>
</dbReference>
<dbReference type="FunFam" id="1.10.287.80:FF:000003">
    <property type="entry name" value="ATP synthase gamma chain, chloroplastic"/>
    <property type="match status" value="1"/>
</dbReference>
<dbReference type="Gene3D" id="3.40.1380.10">
    <property type="match status" value="1"/>
</dbReference>
<dbReference type="Gene3D" id="1.10.287.80">
    <property type="entry name" value="ATP synthase, gamma subunit, helix hairpin domain"/>
    <property type="match status" value="2"/>
</dbReference>
<dbReference type="HAMAP" id="MF_00815">
    <property type="entry name" value="ATP_synth_gamma_bact"/>
    <property type="match status" value="1"/>
</dbReference>
<dbReference type="InterPro" id="IPR035968">
    <property type="entry name" value="ATP_synth_F1_ATPase_gsu"/>
</dbReference>
<dbReference type="InterPro" id="IPR000131">
    <property type="entry name" value="ATP_synth_F1_gsu"/>
</dbReference>
<dbReference type="NCBIfam" id="TIGR01146">
    <property type="entry name" value="ATPsyn_F1gamma"/>
    <property type="match status" value="1"/>
</dbReference>
<dbReference type="NCBIfam" id="NF004145">
    <property type="entry name" value="PRK05621.1-2"/>
    <property type="match status" value="1"/>
</dbReference>
<dbReference type="PANTHER" id="PTHR11693">
    <property type="entry name" value="ATP SYNTHASE GAMMA CHAIN"/>
    <property type="match status" value="1"/>
</dbReference>
<dbReference type="PANTHER" id="PTHR11693:SF41">
    <property type="entry name" value="ATP SYNTHASE GAMMA CHAIN, CHLOROPLASTIC"/>
    <property type="match status" value="1"/>
</dbReference>
<dbReference type="Pfam" id="PF00231">
    <property type="entry name" value="ATP-synt"/>
    <property type="match status" value="1"/>
</dbReference>
<dbReference type="PRINTS" id="PR00126">
    <property type="entry name" value="ATPASEGAMMA"/>
</dbReference>
<dbReference type="SUPFAM" id="SSF52943">
    <property type="entry name" value="ATP synthase (F1-ATPase), gamma subunit"/>
    <property type="match status" value="1"/>
</dbReference>
<organism>
    <name type="scientific">Prochlorococcus marinus (strain MIT 9313)</name>
    <dbReference type="NCBI Taxonomy" id="74547"/>
    <lineage>
        <taxon>Bacteria</taxon>
        <taxon>Bacillati</taxon>
        <taxon>Cyanobacteriota</taxon>
        <taxon>Cyanophyceae</taxon>
        <taxon>Synechococcales</taxon>
        <taxon>Prochlorococcaceae</taxon>
        <taxon>Prochlorococcus</taxon>
    </lineage>
</organism>
<keyword id="KW-0066">ATP synthesis</keyword>
<keyword id="KW-0139">CF(1)</keyword>
<keyword id="KW-0375">Hydrogen ion transport</keyword>
<keyword id="KW-0406">Ion transport</keyword>
<keyword id="KW-0472">Membrane</keyword>
<keyword id="KW-1185">Reference proteome</keyword>
<keyword id="KW-0793">Thylakoid</keyword>
<keyword id="KW-0813">Transport</keyword>
<sequence>MANLKDIRDRIVSVKNTRKITEAMRLVAAAKVRRAQEQVLRSRPFADRLARVLENIQSRMSFEMADAPLLKTSDLKTITLLAVTGDRGLCGGYNSNIIKRTEQRYAELNGQGYKVDLVLIGRKAITYFSNRSSQYTIRATFTGLEQVPTSDDAESITTEVLAEFLSQSTDRIEVIYTKFINLVSCNPVVQTLLPLDPQGIAEADDEIFRLTTKDSRLTVEKGVGPANEQPPLPSDIIFEQSPEQLLNALLPLYLQNQMLRALQESAASELASRMTAMNNASDNAKALAKTLTLDYNKARQAAITQEILEVVGGSCT</sequence>
<protein>
    <recommendedName>
        <fullName evidence="1">ATP synthase gamma chain</fullName>
    </recommendedName>
    <alternativeName>
        <fullName evidence="1">ATP synthase F1 sector gamma subunit</fullName>
    </alternativeName>
    <alternativeName>
        <fullName evidence="1">F-ATPase gamma subunit</fullName>
    </alternativeName>
</protein>
<reference key="1">
    <citation type="journal article" date="2003" name="Nature">
        <title>Genome divergence in two Prochlorococcus ecotypes reflects oceanic niche differentiation.</title>
        <authorList>
            <person name="Rocap G."/>
            <person name="Larimer F.W."/>
            <person name="Lamerdin J.E."/>
            <person name="Malfatti S."/>
            <person name="Chain P."/>
            <person name="Ahlgren N.A."/>
            <person name="Arellano A."/>
            <person name="Coleman M."/>
            <person name="Hauser L."/>
            <person name="Hess W.R."/>
            <person name="Johnson Z.I."/>
            <person name="Land M.L."/>
            <person name="Lindell D."/>
            <person name="Post A.F."/>
            <person name="Regala W."/>
            <person name="Shah M."/>
            <person name="Shaw S.L."/>
            <person name="Steglich C."/>
            <person name="Sullivan M.B."/>
            <person name="Ting C.S."/>
            <person name="Tolonen A."/>
            <person name="Webb E.A."/>
            <person name="Zinser E.R."/>
            <person name="Chisholm S.W."/>
        </authorList>
    </citation>
    <scope>NUCLEOTIDE SEQUENCE [LARGE SCALE GENOMIC DNA]</scope>
    <source>
        <strain>MIT 9313</strain>
    </source>
</reference>